<evidence type="ECO:0000255" key="1">
    <source>
        <dbReference type="HAMAP-Rule" id="MF_00420"/>
    </source>
</evidence>
<proteinExistence type="inferred from homology"/>
<organism>
    <name type="scientific">Leuconostoc mesenteroides subsp. mesenteroides (strain ATCC 8293 / DSM 20343 / BCRC 11652 / CCM 1803 / JCM 6124 / NCDO 523 / NBRC 100496 / NCIMB 8023 / NCTC 12954 / NRRL B-1118 / 37Y)</name>
    <dbReference type="NCBI Taxonomy" id="203120"/>
    <lineage>
        <taxon>Bacteria</taxon>
        <taxon>Bacillati</taxon>
        <taxon>Bacillota</taxon>
        <taxon>Bacilli</taxon>
        <taxon>Lactobacillales</taxon>
        <taxon>Lactobacillaceae</taxon>
        <taxon>Leuconostoc</taxon>
    </lineage>
</organism>
<keyword id="KW-0067">ATP-binding</keyword>
<keyword id="KW-0963">Cytoplasm</keyword>
<keyword id="KW-0436">Ligase</keyword>
<keyword id="KW-0460">Magnesium</keyword>
<keyword id="KW-0479">Metal-binding</keyword>
<keyword id="KW-0547">Nucleotide-binding</keyword>
<keyword id="KW-0658">Purine biosynthesis</keyword>
<keyword id="KW-1185">Reference proteome</keyword>
<protein>
    <recommendedName>
        <fullName evidence="1">Phosphoribosylformylglycinamidine synthase subunit PurL</fullName>
        <shortName evidence="1">FGAM synthase</shortName>
        <ecNumber evidence="1">6.3.5.3</ecNumber>
    </recommendedName>
    <alternativeName>
        <fullName evidence="1">Formylglycinamide ribonucleotide amidotransferase subunit II</fullName>
        <shortName evidence="1">FGAR amidotransferase II</shortName>
        <shortName evidence="1">FGAR-AT II</shortName>
    </alternativeName>
    <alternativeName>
        <fullName evidence="1">Glutamine amidotransferase PurL</fullName>
    </alternativeName>
    <alternativeName>
        <fullName evidence="1">Phosphoribosylformylglycinamidine synthase subunit II</fullName>
    </alternativeName>
</protein>
<gene>
    <name evidence="1" type="primary">purL</name>
    <name type="ordered locus">LEUM_0723</name>
</gene>
<accession>Q03Y89</accession>
<reference key="1">
    <citation type="journal article" date="2006" name="Proc. Natl. Acad. Sci. U.S.A.">
        <title>Comparative genomics of the lactic acid bacteria.</title>
        <authorList>
            <person name="Makarova K.S."/>
            <person name="Slesarev A."/>
            <person name="Wolf Y.I."/>
            <person name="Sorokin A."/>
            <person name="Mirkin B."/>
            <person name="Koonin E.V."/>
            <person name="Pavlov A."/>
            <person name="Pavlova N."/>
            <person name="Karamychev V."/>
            <person name="Polouchine N."/>
            <person name="Shakhova V."/>
            <person name="Grigoriev I."/>
            <person name="Lou Y."/>
            <person name="Rohksar D."/>
            <person name="Lucas S."/>
            <person name="Huang K."/>
            <person name="Goodstein D.M."/>
            <person name="Hawkins T."/>
            <person name="Plengvidhya V."/>
            <person name="Welker D."/>
            <person name="Hughes J."/>
            <person name="Goh Y."/>
            <person name="Benson A."/>
            <person name="Baldwin K."/>
            <person name="Lee J.-H."/>
            <person name="Diaz-Muniz I."/>
            <person name="Dosti B."/>
            <person name="Smeianov V."/>
            <person name="Wechter W."/>
            <person name="Barabote R."/>
            <person name="Lorca G."/>
            <person name="Altermann E."/>
            <person name="Barrangou R."/>
            <person name="Ganesan B."/>
            <person name="Xie Y."/>
            <person name="Rawsthorne H."/>
            <person name="Tamir D."/>
            <person name="Parker C."/>
            <person name="Breidt F."/>
            <person name="Broadbent J.R."/>
            <person name="Hutkins R."/>
            <person name="O'Sullivan D."/>
            <person name="Steele J."/>
            <person name="Unlu G."/>
            <person name="Saier M.H. Jr."/>
            <person name="Klaenhammer T."/>
            <person name="Richardson P."/>
            <person name="Kozyavkin S."/>
            <person name="Weimer B.C."/>
            <person name="Mills D.A."/>
        </authorList>
    </citation>
    <scope>NUCLEOTIDE SEQUENCE [LARGE SCALE GENOMIC DNA]</scope>
    <source>
        <strain>ATCC 8293 / DSM 20343 / BCRC 11652 / CCM 1803 / JCM 6124 / NCDO 523 / NBRC 100496 / NCIMB 8023 / NCTC 12954 / NRRL B-1118 / 37Y</strain>
    </source>
</reference>
<sequence length="738" mass="79730">MTTNELSPEEVRDSKIYIEWGLTEQEYDLIVKELKRLPNFTETGIFSGMWSEHVSYKKSKPILRKFWSSNERVLQGPGEGAGILDIGDNQAVVFKAESHNHPSFVEPYEGAATGVGGILRDIFSMGAQPIAVLDSLRFGELDNAHTKHIVDGVIAGIAGYGNAIGIPTVGGEIGFDGVYAGNPLVNVMAVGLMDQNAMQVGQAKGIGNSIIYVGAKTGRDGINGASFASAEFSSAEKSDRSAVQVGDPFLEKLVMDATLQAIREHSDIIVGIQDMGAAGLLSSSSEMAAKAGMGIHLNLDMVPQRETGMTPYELMLSESQERMVLVVKKGEEQAIIDLFQSADLDAVIIGQVTDDGRYRLNFKNEVVADVPVDFLTHAPKQDLPMIEPARLANFTDEQFEPDMGNVKETILTLLAQPTIASKASLFRHFDSQVRADTAIKPGGDAALIRIRDTQKALAMTTDVNARYLYLNPRVGAKMAVAEAARNIVSTGAKPIGITDGLNFGSPDNPEVYYELDQAVAGINDVAKQLDTPIISGNVSLYNETDGQAIYPTPMIGMVGLLEDITKATRTAFQKAGDNIYLVGRTKDSFNGSEIQKMQTGHIAGQLFDFNDEDELAAQQVILDVTDQRLLNSAHDLSEGGLIVGLLESAFAGNLGFDISVDLADKYLFSETPSRFVVSVSPENRTTFESLAGDRVIKLGVVTADDTINITTTTSDIQLSLIETKKIYQESIAWKLNAE</sequence>
<name>PURL_LEUMM</name>
<feature type="chain" id="PRO_1000060092" description="Phosphoribosylformylglycinamidine synthase subunit PurL">
    <location>
        <begin position="1"/>
        <end position="738"/>
    </location>
</feature>
<feature type="active site" evidence="1">
    <location>
        <position position="53"/>
    </location>
</feature>
<feature type="active site" description="Proton acceptor" evidence="1">
    <location>
        <position position="99"/>
    </location>
</feature>
<feature type="binding site" evidence="1">
    <location>
        <position position="56"/>
    </location>
    <ligand>
        <name>ATP</name>
        <dbReference type="ChEBI" id="CHEBI:30616"/>
    </ligand>
</feature>
<feature type="binding site" evidence="1">
    <location>
        <position position="95"/>
    </location>
    <ligand>
        <name>ATP</name>
        <dbReference type="ChEBI" id="CHEBI:30616"/>
    </ligand>
</feature>
<feature type="binding site" evidence="1">
    <location>
        <position position="97"/>
    </location>
    <ligand>
        <name>Mg(2+)</name>
        <dbReference type="ChEBI" id="CHEBI:18420"/>
        <label>1</label>
    </ligand>
</feature>
<feature type="binding site" evidence="1">
    <location>
        <begin position="98"/>
        <end position="101"/>
    </location>
    <ligand>
        <name>substrate</name>
    </ligand>
</feature>
<feature type="binding site" evidence="1">
    <location>
        <position position="120"/>
    </location>
    <ligand>
        <name>substrate</name>
    </ligand>
</feature>
<feature type="binding site" evidence="1">
    <location>
        <position position="121"/>
    </location>
    <ligand>
        <name>Mg(2+)</name>
        <dbReference type="ChEBI" id="CHEBI:18420"/>
        <label>2</label>
    </ligand>
</feature>
<feature type="binding site" evidence="1">
    <location>
        <position position="244"/>
    </location>
    <ligand>
        <name>substrate</name>
    </ligand>
</feature>
<feature type="binding site" evidence="1">
    <location>
        <position position="274"/>
    </location>
    <ligand>
        <name>Mg(2+)</name>
        <dbReference type="ChEBI" id="CHEBI:18420"/>
        <label>2</label>
    </ligand>
</feature>
<feature type="binding site" evidence="1">
    <location>
        <begin position="318"/>
        <end position="320"/>
    </location>
    <ligand>
        <name>substrate</name>
    </ligand>
</feature>
<feature type="binding site" evidence="1">
    <location>
        <position position="499"/>
    </location>
    <ligand>
        <name>ATP</name>
        <dbReference type="ChEBI" id="CHEBI:30616"/>
    </ligand>
</feature>
<feature type="binding site" evidence="1">
    <location>
        <position position="536"/>
    </location>
    <ligand>
        <name>ATP</name>
        <dbReference type="ChEBI" id="CHEBI:30616"/>
    </ligand>
</feature>
<feature type="binding site" evidence="1">
    <location>
        <position position="537"/>
    </location>
    <ligand>
        <name>Mg(2+)</name>
        <dbReference type="ChEBI" id="CHEBI:18420"/>
        <label>1</label>
    </ligand>
</feature>
<feature type="binding site" evidence="1">
    <location>
        <position position="539"/>
    </location>
    <ligand>
        <name>substrate</name>
    </ligand>
</feature>
<comment type="function">
    <text evidence="1">Part of the phosphoribosylformylglycinamidine synthase complex involved in the purines biosynthetic pathway. Catalyzes the ATP-dependent conversion of formylglycinamide ribonucleotide (FGAR) and glutamine to yield formylglycinamidine ribonucleotide (FGAM) and glutamate. The FGAM synthase complex is composed of three subunits. PurQ produces an ammonia molecule by converting glutamine to glutamate. PurL transfers the ammonia molecule to FGAR to form FGAM in an ATP-dependent manner. PurS interacts with PurQ and PurL and is thought to assist in the transfer of the ammonia molecule from PurQ to PurL.</text>
</comment>
<comment type="catalytic activity">
    <reaction evidence="1">
        <text>N(2)-formyl-N(1)-(5-phospho-beta-D-ribosyl)glycinamide + L-glutamine + ATP + H2O = 2-formamido-N(1)-(5-O-phospho-beta-D-ribosyl)acetamidine + L-glutamate + ADP + phosphate + H(+)</text>
        <dbReference type="Rhea" id="RHEA:17129"/>
        <dbReference type="ChEBI" id="CHEBI:15377"/>
        <dbReference type="ChEBI" id="CHEBI:15378"/>
        <dbReference type="ChEBI" id="CHEBI:29985"/>
        <dbReference type="ChEBI" id="CHEBI:30616"/>
        <dbReference type="ChEBI" id="CHEBI:43474"/>
        <dbReference type="ChEBI" id="CHEBI:58359"/>
        <dbReference type="ChEBI" id="CHEBI:147286"/>
        <dbReference type="ChEBI" id="CHEBI:147287"/>
        <dbReference type="ChEBI" id="CHEBI:456216"/>
        <dbReference type="EC" id="6.3.5.3"/>
    </reaction>
</comment>
<comment type="pathway">
    <text evidence="1">Purine metabolism; IMP biosynthesis via de novo pathway; 5-amino-1-(5-phospho-D-ribosyl)imidazole from N(2)-formyl-N(1)-(5-phospho-D-ribosyl)glycinamide: step 1/2.</text>
</comment>
<comment type="subunit">
    <text evidence="1">Monomer. Part of the FGAM synthase complex composed of 1 PurL, 1 PurQ and 2 PurS subunits.</text>
</comment>
<comment type="subcellular location">
    <subcellularLocation>
        <location evidence="1">Cytoplasm</location>
    </subcellularLocation>
</comment>
<comment type="similarity">
    <text evidence="1">Belongs to the FGAMS family.</text>
</comment>
<dbReference type="EC" id="6.3.5.3" evidence="1"/>
<dbReference type="EMBL" id="CP000414">
    <property type="protein sequence ID" value="ABJ61833.1"/>
    <property type="molecule type" value="Genomic_DNA"/>
</dbReference>
<dbReference type="RefSeq" id="WP_011679513.1">
    <property type="nucleotide sequence ID" value="NC_008531.1"/>
</dbReference>
<dbReference type="SMR" id="Q03Y89"/>
<dbReference type="EnsemblBacteria" id="ABJ61833">
    <property type="protein sequence ID" value="ABJ61833"/>
    <property type="gene ID" value="LEUM_0723"/>
</dbReference>
<dbReference type="GeneID" id="29575985"/>
<dbReference type="KEGG" id="lme:LEUM_0723"/>
<dbReference type="eggNOG" id="COG0046">
    <property type="taxonomic scope" value="Bacteria"/>
</dbReference>
<dbReference type="HOGENOM" id="CLU_003100_0_1_9"/>
<dbReference type="UniPathway" id="UPA00074">
    <property type="reaction ID" value="UER00128"/>
</dbReference>
<dbReference type="Proteomes" id="UP000000362">
    <property type="component" value="Chromosome"/>
</dbReference>
<dbReference type="GO" id="GO:0005737">
    <property type="term" value="C:cytoplasm"/>
    <property type="evidence" value="ECO:0007669"/>
    <property type="project" value="UniProtKB-SubCell"/>
</dbReference>
<dbReference type="GO" id="GO:0005524">
    <property type="term" value="F:ATP binding"/>
    <property type="evidence" value="ECO:0007669"/>
    <property type="project" value="UniProtKB-UniRule"/>
</dbReference>
<dbReference type="GO" id="GO:0000287">
    <property type="term" value="F:magnesium ion binding"/>
    <property type="evidence" value="ECO:0007669"/>
    <property type="project" value="UniProtKB-UniRule"/>
</dbReference>
<dbReference type="GO" id="GO:0004642">
    <property type="term" value="F:phosphoribosylformylglycinamidine synthase activity"/>
    <property type="evidence" value="ECO:0007669"/>
    <property type="project" value="UniProtKB-UniRule"/>
</dbReference>
<dbReference type="GO" id="GO:0006189">
    <property type="term" value="P:'de novo' IMP biosynthetic process"/>
    <property type="evidence" value="ECO:0007669"/>
    <property type="project" value="UniProtKB-UniRule"/>
</dbReference>
<dbReference type="CDD" id="cd02203">
    <property type="entry name" value="PurL_repeat1"/>
    <property type="match status" value="1"/>
</dbReference>
<dbReference type="CDD" id="cd02204">
    <property type="entry name" value="PurL_repeat2"/>
    <property type="match status" value="1"/>
</dbReference>
<dbReference type="FunFam" id="3.30.1330.10:FF:000004">
    <property type="entry name" value="Phosphoribosylformylglycinamidine synthase subunit PurL"/>
    <property type="match status" value="1"/>
</dbReference>
<dbReference type="Gene3D" id="3.90.650.10">
    <property type="entry name" value="PurM-like C-terminal domain"/>
    <property type="match status" value="2"/>
</dbReference>
<dbReference type="Gene3D" id="3.30.1330.10">
    <property type="entry name" value="PurM-like, N-terminal domain"/>
    <property type="match status" value="2"/>
</dbReference>
<dbReference type="HAMAP" id="MF_00420">
    <property type="entry name" value="PurL_2"/>
    <property type="match status" value="1"/>
</dbReference>
<dbReference type="InterPro" id="IPR010074">
    <property type="entry name" value="PRibForGlyAmidine_synth_PurL"/>
</dbReference>
<dbReference type="InterPro" id="IPR041609">
    <property type="entry name" value="PurL_linker"/>
</dbReference>
<dbReference type="InterPro" id="IPR010918">
    <property type="entry name" value="PurM-like_C_dom"/>
</dbReference>
<dbReference type="InterPro" id="IPR036676">
    <property type="entry name" value="PurM-like_C_sf"/>
</dbReference>
<dbReference type="InterPro" id="IPR016188">
    <property type="entry name" value="PurM-like_N"/>
</dbReference>
<dbReference type="InterPro" id="IPR036921">
    <property type="entry name" value="PurM-like_N_sf"/>
</dbReference>
<dbReference type="NCBIfam" id="TIGR01736">
    <property type="entry name" value="FGAM_synth_II"/>
    <property type="match status" value="1"/>
</dbReference>
<dbReference type="NCBIfam" id="NF002290">
    <property type="entry name" value="PRK01213.1"/>
    <property type="match status" value="1"/>
</dbReference>
<dbReference type="PANTHER" id="PTHR43555">
    <property type="entry name" value="PHOSPHORIBOSYLFORMYLGLYCINAMIDINE SYNTHASE SUBUNIT PURL"/>
    <property type="match status" value="1"/>
</dbReference>
<dbReference type="PANTHER" id="PTHR43555:SF1">
    <property type="entry name" value="PHOSPHORIBOSYLFORMYLGLYCINAMIDINE SYNTHASE SUBUNIT PURL"/>
    <property type="match status" value="1"/>
</dbReference>
<dbReference type="Pfam" id="PF00586">
    <property type="entry name" value="AIRS"/>
    <property type="match status" value="2"/>
</dbReference>
<dbReference type="Pfam" id="PF02769">
    <property type="entry name" value="AIRS_C"/>
    <property type="match status" value="2"/>
</dbReference>
<dbReference type="Pfam" id="PF18072">
    <property type="entry name" value="FGAR-AT_linker"/>
    <property type="match status" value="1"/>
</dbReference>
<dbReference type="PIRSF" id="PIRSF001587">
    <property type="entry name" value="FGAM_synthase_II"/>
    <property type="match status" value="1"/>
</dbReference>
<dbReference type="SUPFAM" id="SSF56042">
    <property type="entry name" value="PurM C-terminal domain-like"/>
    <property type="match status" value="2"/>
</dbReference>
<dbReference type="SUPFAM" id="SSF55326">
    <property type="entry name" value="PurM N-terminal domain-like"/>
    <property type="match status" value="2"/>
</dbReference>